<keyword id="KW-0131">Cell cycle</keyword>
<keyword id="KW-0132">Cell division</keyword>
<keyword id="KW-0963">Cytoplasm</keyword>
<keyword id="KW-0206">Cytoskeleton</keyword>
<keyword id="KW-0493">Microtubule</keyword>
<keyword id="KW-0498">Mitosis</keyword>
<keyword id="KW-1185">Reference proteome</keyword>
<accession>P87244</accession>
<comment type="function">
    <text evidence="1">Component of the gamma tubule complex that is required for the regulation of both interphase microtubules and mitotic bipolar spindles.</text>
</comment>
<comment type="subunit">
    <text evidence="1">Interacts with gamma-tubulin.</text>
</comment>
<comment type="subcellular location">
    <subcellularLocation>
        <location evidence="1">Cytoplasm</location>
        <location evidence="1">Cytoskeleton</location>
        <location evidence="1">Microtubule organizing center</location>
        <location evidence="1">Spindle pole body</location>
    </subcellularLocation>
    <text>And the microtubule organizing center (MTOC).</text>
</comment>
<dbReference type="EMBL" id="AB074978">
    <property type="protein sequence ID" value="BAB79248.1"/>
    <property type="molecule type" value="Genomic_DNA"/>
</dbReference>
<dbReference type="EMBL" id="CU329672">
    <property type="protein sequence ID" value="CAB09763.1"/>
    <property type="molecule type" value="Genomic_DNA"/>
</dbReference>
<dbReference type="PIR" id="T41357">
    <property type="entry name" value="T41357"/>
</dbReference>
<dbReference type="RefSeq" id="NP_587819.1">
    <property type="nucleotide sequence ID" value="NM_001022812.2"/>
</dbReference>
<dbReference type="BioGRID" id="275876">
    <property type="interactions" value="59"/>
</dbReference>
<dbReference type="FunCoup" id="P87244">
    <property type="interactions" value="6"/>
</dbReference>
<dbReference type="STRING" id="284812.P87244"/>
<dbReference type="iPTMnet" id="P87244"/>
<dbReference type="PaxDb" id="4896-SPCC4G3.19.1"/>
<dbReference type="EnsemblFungi" id="SPCC4G3.19.1">
    <property type="protein sequence ID" value="SPCC4G3.19.1:pep"/>
    <property type="gene ID" value="SPCC4G3.19"/>
</dbReference>
<dbReference type="GeneID" id="2539309"/>
<dbReference type="KEGG" id="spo:2539309"/>
<dbReference type="PomBase" id="SPCC4G3.19">
    <property type="gene designation" value="alp16"/>
</dbReference>
<dbReference type="VEuPathDB" id="FungiDB:SPCC4G3.19"/>
<dbReference type="HOGENOM" id="CLU_374751_0_0_1"/>
<dbReference type="InParanoid" id="P87244"/>
<dbReference type="OMA" id="NVCCFQS"/>
<dbReference type="PRO" id="PR:P87244"/>
<dbReference type="Proteomes" id="UP000002485">
    <property type="component" value="Chromosome III"/>
</dbReference>
<dbReference type="GO" id="GO:0005737">
    <property type="term" value="C:cytoplasm"/>
    <property type="evidence" value="ECO:0007669"/>
    <property type="project" value="UniProtKB-KW"/>
</dbReference>
<dbReference type="GO" id="GO:0000923">
    <property type="term" value="C:equatorial microtubule organizing center"/>
    <property type="evidence" value="ECO:0000314"/>
    <property type="project" value="PomBase"/>
</dbReference>
<dbReference type="GO" id="GO:0000930">
    <property type="term" value="C:gamma-tubulin complex"/>
    <property type="evidence" value="ECO:0000318"/>
    <property type="project" value="GO_Central"/>
</dbReference>
<dbReference type="GO" id="GO:0000931">
    <property type="term" value="C:gamma-tubulin ring complex"/>
    <property type="evidence" value="ECO:0000314"/>
    <property type="project" value="PomBase"/>
</dbReference>
<dbReference type="GO" id="GO:0005874">
    <property type="term" value="C:microtubule"/>
    <property type="evidence" value="ECO:0007669"/>
    <property type="project" value="UniProtKB-KW"/>
</dbReference>
<dbReference type="GO" id="GO:0044732">
    <property type="term" value="C:mitotic spindle pole body"/>
    <property type="evidence" value="ECO:0007005"/>
    <property type="project" value="PomBase"/>
</dbReference>
<dbReference type="GO" id="GO:0000922">
    <property type="term" value="C:spindle pole"/>
    <property type="evidence" value="ECO:0007669"/>
    <property type="project" value="InterPro"/>
</dbReference>
<dbReference type="GO" id="GO:0043015">
    <property type="term" value="F:gamma-tubulin binding"/>
    <property type="evidence" value="ECO:0000318"/>
    <property type="project" value="GO_Central"/>
</dbReference>
<dbReference type="GO" id="GO:0051301">
    <property type="term" value="P:cell division"/>
    <property type="evidence" value="ECO:0007669"/>
    <property type="project" value="UniProtKB-KW"/>
</dbReference>
<dbReference type="GO" id="GO:0031122">
    <property type="term" value="P:cytoplasmic microtubule organization"/>
    <property type="evidence" value="ECO:0000315"/>
    <property type="project" value="PomBase"/>
</dbReference>
<dbReference type="GO" id="GO:1990735">
    <property type="term" value="P:gamma-tubulin complex localization to mitotic spindle pole body"/>
    <property type="evidence" value="ECO:0000315"/>
    <property type="project" value="PomBase"/>
</dbReference>
<dbReference type="GO" id="GO:0051321">
    <property type="term" value="P:meiotic cell cycle"/>
    <property type="evidence" value="ECO:0000318"/>
    <property type="project" value="GO_Central"/>
</dbReference>
<dbReference type="GO" id="GO:0007020">
    <property type="term" value="P:microtubule nucleation"/>
    <property type="evidence" value="ECO:0000318"/>
    <property type="project" value="GO_Central"/>
</dbReference>
<dbReference type="GO" id="GO:0051415">
    <property type="term" value="P:microtubule nucleation by interphase microtubule organizing center"/>
    <property type="evidence" value="ECO:0000316"/>
    <property type="project" value="PomBase"/>
</dbReference>
<dbReference type="GO" id="GO:0000278">
    <property type="term" value="P:mitotic cell cycle"/>
    <property type="evidence" value="ECO:0000318"/>
    <property type="project" value="GO_Central"/>
</dbReference>
<dbReference type="GO" id="GO:0051225">
    <property type="term" value="P:spindle assembly"/>
    <property type="evidence" value="ECO:0000318"/>
    <property type="project" value="GO_Central"/>
</dbReference>
<dbReference type="InterPro" id="IPR007259">
    <property type="entry name" value="GCP"/>
</dbReference>
<dbReference type="PANTHER" id="PTHR19302">
    <property type="entry name" value="GAMMA TUBULIN COMPLEX PROTEIN"/>
    <property type="match status" value="1"/>
</dbReference>
<dbReference type="PANTHER" id="PTHR19302:SF13">
    <property type="entry name" value="GAMMA-TUBULIN COMPLEX COMPONENT 2"/>
    <property type="match status" value="1"/>
</dbReference>
<name>ALP16_SCHPO</name>
<gene>
    <name type="primary">alp16</name>
    <name type="ORF">SPCC4G3.19</name>
</gene>
<evidence type="ECO:0000269" key="1">
    <source>
    </source>
</evidence>
<sequence length="759" mass="87236">MDGIMKNDLLWFGNHVFDLTPNSFDSDFVEQLSKFEGKEGLKRKLFDSSEYFQNFSFQVNDDLLGKDVILDISNQQLTPAVPGCETSSNSKLISASKEITSERKRAKSSVSPSYLTDSSPSDLSVENKVLLTCPSWDGENFKNLEARSPFISEAPSRVYDYFLHNQDWSPKPLFSALQVYPLATIFNCVAGLPQGFESTVFPWNKTSSTFELDPTISVSGMSDECFASIVQKFSAIGGLIKKALNEFSLYKTNISFYLSNFIVNGVLQYRKEFQRWLRLYEFRRFGLIGLSNFVNSFSSFFELISHFLIKSAQNLKGDSLLDFLFDYARSCQNTISYPIALQCLIYCSNPYFKRLELALKVSCAYGHIDSSLFLSLPRFFPSELCVSIEQCIQFLSLIREQKEIFNKNNKEFINPLNIRFAYSFNDINQACVIEERCNFSSLSFGNLEQTSVNNDSEEFETLLAKMNMTPDFNDNLLQLKFTDDVRNVCPLNLNVCCCIAEPIQSFILSFLRSTYKVLKNDFQVFDLLNFFHSTFLFQNYEFSDNVISLLKSRRLDKSDRNELAEDLNSDDRYNFISRLKKFIFMEKEKNGLSRSLSKSITFTLDSASVSEFEDVYPDLQFQCQVIGALRILFTDNSLNYYSKTFSYVLHLFQAQSDFESSVELKDRSIVTKTTIMSWSKYQGTKESLFQFLSIYIPECMLPFTKLLKSIYSPDCPTNIQNSAIKNAASVHEQCTKAIYQKVKELFDTMKLWESSIKVS</sequence>
<protein>
    <recommendedName>
        <fullName>Spindle pole body component alp16</fullName>
    </recommendedName>
    <alternativeName>
        <fullName>Altered polarity protein 16</fullName>
    </alternativeName>
</protein>
<feature type="chain" id="PRO_0000064567" description="Spindle pole body component alp16">
    <location>
        <begin position="1"/>
        <end position="759"/>
    </location>
</feature>
<organism>
    <name type="scientific">Schizosaccharomyces pombe (strain 972 / ATCC 24843)</name>
    <name type="common">Fission yeast</name>
    <dbReference type="NCBI Taxonomy" id="284812"/>
    <lineage>
        <taxon>Eukaryota</taxon>
        <taxon>Fungi</taxon>
        <taxon>Dikarya</taxon>
        <taxon>Ascomycota</taxon>
        <taxon>Taphrinomycotina</taxon>
        <taxon>Schizosaccharomycetes</taxon>
        <taxon>Schizosaccharomycetales</taxon>
        <taxon>Schizosaccharomycetaceae</taxon>
        <taxon>Schizosaccharomyces</taxon>
    </lineage>
</organism>
<proteinExistence type="evidence at protein level"/>
<reference key="1">
    <citation type="journal article" date="2002" name="Mol. Biol. Cell">
        <title>A fourth component of the fission yeast gamma-tubulin complex, Alp16, is required for cytoplasmic microtubule integrity and becomes indispensable when gamma-tubulin function is compromised.</title>
        <authorList>
            <person name="Fujita A."/>
            <person name="Vardy L."/>
            <person name="Garcia M.-I."/>
            <person name="Toda T."/>
        </authorList>
    </citation>
    <scope>NUCLEOTIDE SEQUENCE [GENOMIC DNA]</scope>
    <scope>FUNCTION</scope>
    <scope>SUBUNIT</scope>
    <scope>SUBCELLULAR LOCATION</scope>
</reference>
<reference key="2">
    <citation type="journal article" date="2002" name="Nature">
        <title>The genome sequence of Schizosaccharomyces pombe.</title>
        <authorList>
            <person name="Wood V."/>
            <person name="Gwilliam R."/>
            <person name="Rajandream M.A."/>
            <person name="Lyne M.H."/>
            <person name="Lyne R."/>
            <person name="Stewart A."/>
            <person name="Sgouros J.G."/>
            <person name="Peat N."/>
            <person name="Hayles J."/>
            <person name="Baker S.G."/>
            <person name="Basham D."/>
            <person name="Bowman S."/>
            <person name="Brooks K."/>
            <person name="Brown D."/>
            <person name="Brown S."/>
            <person name="Chillingworth T."/>
            <person name="Churcher C.M."/>
            <person name="Collins M."/>
            <person name="Connor R."/>
            <person name="Cronin A."/>
            <person name="Davis P."/>
            <person name="Feltwell T."/>
            <person name="Fraser A."/>
            <person name="Gentles S."/>
            <person name="Goble A."/>
            <person name="Hamlin N."/>
            <person name="Harris D.E."/>
            <person name="Hidalgo J."/>
            <person name="Hodgson G."/>
            <person name="Holroyd S."/>
            <person name="Hornsby T."/>
            <person name="Howarth S."/>
            <person name="Huckle E.J."/>
            <person name="Hunt S."/>
            <person name="Jagels K."/>
            <person name="James K.D."/>
            <person name="Jones L."/>
            <person name="Jones M."/>
            <person name="Leather S."/>
            <person name="McDonald S."/>
            <person name="McLean J."/>
            <person name="Mooney P."/>
            <person name="Moule S."/>
            <person name="Mungall K.L."/>
            <person name="Murphy L.D."/>
            <person name="Niblett D."/>
            <person name="Odell C."/>
            <person name="Oliver K."/>
            <person name="O'Neil S."/>
            <person name="Pearson D."/>
            <person name="Quail M.A."/>
            <person name="Rabbinowitsch E."/>
            <person name="Rutherford K.M."/>
            <person name="Rutter S."/>
            <person name="Saunders D."/>
            <person name="Seeger K."/>
            <person name="Sharp S."/>
            <person name="Skelton J."/>
            <person name="Simmonds M.N."/>
            <person name="Squares R."/>
            <person name="Squares S."/>
            <person name="Stevens K."/>
            <person name="Taylor K."/>
            <person name="Taylor R.G."/>
            <person name="Tivey A."/>
            <person name="Walsh S.V."/>
            <person name="Warren T."/>
            <person name="Whitehead S."/>
            <person name="Woodward J.R."/>
            <person name="Volckaert G."/>
            <person name="Aert R."/>
            <person name="Robben J."/>
            <person name="Grymonprez B."/>
            <person name="Weltjens I."/>
            <person name="Vanstreels E."/>
            <person name="Rieger M."/>
            <person name="Schaefer M."/>
            <person name="Mueller-Auer S."/>
            <person name="Gabel C."/>
            <person name="Fuchs M."/>
            <person name="Duesterhoeft A."/>
            <person name="Fritzc C."/>
            <person name="Holzer E."/>
            <person name="Moestl D."/>
            <person name="Hilbert H."/>
            <person name="Borzym K."/>
            <person name="Langer I."/>
            <person name="Beck A."/>
            <person name="Lehrach H."/>
            <person name="Reinhardt R."/>
            <person name="Pohl T.M."/>
            <person name="Eger P."/>
            <person name="Zimmermann W."/>
            <person name="Wedler H."/>
            <person name="Wambutt R."/>
            <person name="Purnelle B."/>
            <person name="Goffeau A."/>
            <person name="Cadieu E."/>
            <person name="Dreano S."/>
            <person name="Gloux S."/>
            <person name="Lelaure V."/>
            <person name="Mottier S."/>
            <person name="Galibert F."/>
            <person name="Aves S.J."/>
            <person name="Xiang Z."/>
            <person name="Hunt C."/>
            <person name="Moore K."/>
            <person name="Hurst S.M."/>
            <person name="Lucas M."/>
            <person name="Rochet M."/>
            <person name="Gaillardin C."/>
            <person name="Tallada V.A."/>
            <person name="Garzon A."/>
            <person name="Thode G."/>
            <person name="Daga R.R."/>
            <person name="Cruzado L."/>
            <person name="Jimenez J."/>
            <person name="Sanchez M."/>
            <person name="del Rey F."/>
            <person name="Benito J."/>
            <person name="Dominguez A."/>
            <person name="Revuelta J.L."/>
            <person name="Moreno S."/>
            <person name="Armstrong J."/>
            <person name="Forsburg S.L."/>
            <person name="Cerutti L."/>
            <person name="Lowe T."/>
            <person name="McCombie W.R."/>
            <person name="Paulsen I."/>
            <person name="Potashkin J."/>
            <person name="Shpakovski G.V."/>
            <person name="Ussery D."/>
            <person name="Barrell B.G."/>
            <person name="Nurse P."/>
        </authorList>
    </citation>
    <scope>NUCLEOTIDE SEQUENCE [LARGE SCALE GENOMIC DNA]</scope>
    <source>
        <strain>972 / ATCC 24843</strain>
    </source>
</reference>